<organism>
    <name type="scientific">Artibeus jamaicensis</name>
    <name type="common">Jamaican fruit-eating bat</name>
    <dbReference type="NCBI Taxonomy" id="9417"/>
    <lineage>
        <taxon>Eukaryota</taxon>
        <taxon>Metazoa</taxon>
        <taxon>Chordata</taxon>
        <taxon>Craniata</taxon>
        <taxon>Vertebrata</taxon>
        <taxon>Euteleostomi</taxon>
        <taxon>Mammalia</taxon>
        <taxon>Eutheria</taxon>
        <taxon>Laurasiatheria</taxon>
        <taxon>Chiroptera</taxon>
        <taxon>Yangochiroptera</taxon>
        <taxon>Phyllostomidae</taxon>
        <taxon>Stenodermatinae</taxon>
        <taxon>Artibeus</taxon>
    </lineage>
</organism>
<sequence length="98" mass="10930">MSLTYMNMFMAFTISLLGLLMYRSHMMSSLLCLEGMMLSLFVMMTITILNTHLTLASMLPIILLVFAACEAALGLSLLVMVSTTYGMDYVQNLNLLQC</sequence>
<dbReference type="EC" id="7.1.1.2"/>
<dbReference type="EMBL" id="AF061340">
    <property type="protein sequence ID" value="AAD05450.1"/>
    <property type="molecule type" value="Genomic_DNA"/>
</dbReference>
<dbReference type="PIR" id="T11148">
    <property type="entry name" value="T11148"/>
</dbReference>
<dbReference type="RefSeq" id="NP_008492.1">
    <property type="nucleotide sequence ID" value="NC_002009.1"/>
</dbReference>
<dbReference type="SMR" id="O99602"/>
<dbReference type="GeneID" id="808338"/>
<dbReference type="KEGG" id="ajm:808338"/>
<dbReference type="CTD" id="4539"/>
<dbReference type="OrthoDB" id="6146597at2759"/>
<dbReference type="GO" id="GO:0005743">
    <property type="term" value="C:mitochondrial inner membrane"/>
    <property type="evidence" value="ECO:0000250"/>
    <property type="project" value="UniProtKB"/>
</dbReference>
<dbReference type="GO" id="GO:0045271">
    <property type="term" value="C:respiratory chain complex I"/>
    <property type="evidence" value="ECO:0000250"/>
    <property type="project" value="UniProtKB"/>
</dbReference>
<dbReference type="GO" id="GO:0008137">
    <property type="term" value="F:NADH dehydrogenase (ubiquinone) activity"/>
    <property type="evidence" value="ECO:0000250"/>
    <property type="project" value="UniProtKB"/>
</dbReference>
<dbReference type="GO" id="GO:0042773">
    <property type="term" value="P:ATP synthesis coupled electron transport"/>
    <property type="evidence" value="ECO:0007669"/>
    <property type="project" value="InterPro"/>
</dbReference>
<dbReference type="FunFam" id="1.10.287.3510:FF:000002">
    <property type="entry name" value="NADH-ubiquinone oxidoreductase chain 4L"/>
    <property type="match status" value="1"/>
</dbReference>
<dbReference type="Gene3D" id="1.10.287.3510">
    <property type="match status" value="1"/>
</dbReference>
<dbReference type="InterPro" id="IPR001133">
    <property type="entry name" value="NADH_UbQ_OxRdtase_chain4L/K"/>
</dbReference>
<dbReference type="InterPro" id="IPR039428">
    <property type="entry name" value="NUOK/Mnh_C1-like"/>
</dbReference>
<dbReference type="PANTHER" id="PTHR11434:SF0">
    <property type="entry name" value="NADH-UBIQUINONE OXIDOREDUCTASE CHAIN 4L"/>
    <property type="match status" value="1"/>
</dbReference>
<dbReference type="PANTHER" id="PTHR11434">
    <property type="entry name" value="NADH-UBIQUINONE OXIDOREDUCTASE SUBUNIT ND4L"/>
    <property type="match status" value="1"/>
</dbReference>
<dbReference type="Pfam" id="PF00420">
    <property type="entry name" value="Oxidored_q2"/>
    <property type="match status" value="1"/>
</dbReference>
<keyword id="KW-0249">Electron transport</keyword>
<keyword id="KW-0472">Membrane</keyword>
<keyword id="KW-0496">Mitochondrion</keyword>
<keyword id="KW-0999">Mitochondrion inner membrane</keyword>
<keyword id="KW-0520">NAD</keyword>
<keyword id="KW-0679">Respiratory chain</keyword>
<keyword id="KW-1278">Translocase</keyword>
<keyword id="KW-0812">Transmembrane</keyword>
<keyword id="KW-1133">Transmembrane helix</keyword>
<keyword id="KW-0813">Transport</keyword>
<keyword id="KW-0830">Ubiquinone</keyword>
<protein>
    <recommendedName>
        <fullName>NADH-ubiquinone oxidoreductase chain 4L</fullName>
        <ecNumber>7.1.1.2</ecNumber>
    </recommendedName>
    <alternativeName>
        <fullName>NADH dehydrogenase subunit 4L</fullName>
    </alternativeName>
</protein>
<evidence type="ECO:0000250" key="1">
    <source>
        <dbReference type="UniProtKB" id="P03901"/>
    </source>
</evidence>
<evidence type="ECO:0000250" key="2">
    <source>
        <dbReference type="UniProtKB" id="P03902"/>
    </source>
</evidence>
<evidence type="ECO:0000255" key="3"/>
<evidence type="ECO:0000305" key="4"/>
<reference key="1">
    <citation type="journal article" date="1998" name="J. Mol. Evol.">
        <title>Complete mitochondrial genome of a neotropical fruit bat, Artibeus jamaicensis, and a new hypothesis of the relationships of bats to other eutherian mammals.</title>
        <authorList>
            <person name="Pumo D.E."/>
            <person name="Finamore P.S."/>
            <person name="Franek W.R."/>
            <person name="Phillips C.J."/>
            <person name="Tarzami S."/>
            <person name="Balzarano D."/>
        </authorList>
    </citation>
    <scope>NUCLEOTIDE SEQUENCE [GENOMIC DNA]</scope>
</reference>
<geneLocation type="mitochondrion"/>
<feature type="chain" id="PRO_0000274975" description="NADH-ubiquinone oxidoreductase chain 4L">
    <location>
        <begin position="1"/>
        <end position="98"/>
    </location>
</feature>
<feature type="transmembrane region" description="Helical" evidence="3">
    <location>
        <begin position="1"/>
        <end position="21"/>
    </location>
</feature>
<feature type="transmembrane region" description="Helical" evidence="3">
    <location>
        <begin position="29"/>
        <end position="49"/>
    </location>
</feature>
<feature type="transmembrane region" description="Helical" evidence="3">
    <location>
        <begin position="61"/>
        <end position="81"/>
    </location>
</feature>
<proteinExistence type="inferred from homology"/>
<comment type="function">
    <text evidence="1">Core subunit of the mitochondrial membrane respiratory chain NADH dehydrogenase (Complex I) which catalyzes electron transfer from NADH through the respiratory chain, using ubiquinone as an electron acceptor. Part of the enzyme membrane arm which is embedded in the lipid bilayer and involved in proton translocation.</text>
</comment>
<comment type="catalytic activity">
    <reaction evidence="1">
        <text>a ubiquinone + NADH + 5 H(+)(in) = a ubiquinol + NAD(+) + 4 H(+)(out)</text>
        <dbReference type="Rhea" id="RHEA:29091"/>
        <dbReference type="Rhea" id="RHEA-COMP:9565"/>
        <dbReference type="Rhea" id="RHEA-COMP:9566"/>
        <dbReference type="ChEBI" id="CHEBI:15378"/>
        <dbReference type="ChEBI" id="CHEBI:16389"/>
        <dbReference type="ChEBI" id="CHEBI:17976"/>
        <dbReference type="ChEBI" id="CHEBI:57540"/>
        <dbReference type="ChEBI" id="CHEBI:57945"/>
        <dbReference type="EC" id="7.1.1.2"/>
    </reaction>
    <physiologicalReaction direction="left-to-right" evidence="1">
        <dbReference type="Rhea" id="RHEA:29092"/>
    </physiologicalReaction>
</comment>
<comment type="subunit">
    <text evidence="2">Core subunit of respiratory chain NADH dehydrogenase (Complex I) which is composed of 45 different subunits.</text>
</comment>
<comment type="subcellular location">
    <subcellularLocation>
        <location evidence="2">Mitochondrion inner membrane</location>
        <topology evidence="3">Multi-pass membrane protein</topology>
    </subcellularLocation>
</comment>
<comment type="similarity">
    <text evidence="4">Belongs to the complex I subunit 4L family.</text>
</comment>
<accession>O99602</accession>
<name>NU4LM_ARTJA</name>
<gene>
    <name type="primary">MT-ND4L</name>
    <name type="synonym">MTND4L</name>
    <name type="synonym">NADH4L</name>
    <name type="synonym">ND4L</name>
</gene>